<gene>
    <name type="primary">yuiF</name>
    <name type="ordered locus">BSU32040</name>
</gene>
<proteinExistence type="predicted"/>
<accession>O32105</accession>
<name>YUIF_BACSU</name>
<comment type="subcellular location">
    <subcellularLocation>
        <location evidence="2">Cell membrane</location>
        <topology evidence="2">Multi-pass membrane protein</topology>
    </subcellularLocation>
</comment>
<dbReference type="EMBL" id="AL009126">
    <property type="protein sequence ID" value="CAB15194.1"/>
    <property type="molecule type" value="Genomic_DNA"/>
</dbReference>
<dbReference type="PIR" id="G70012">
    <property type="entry name" value="G70012"/>
</dbReference>
<dbReference type="RefSeq" id="WP_003228736.1">
    <property type="nucleotide sequence ID" value="NZ_OZ025638.1"/>
</dbReference>
<dbReference type="SMR" id="O32105"/>
<dbReference type="FunCoup" id="O32105">
    <property type="interactions" value="40"/>
</dbReference>
<dbReference type="STRING" id="224308.BSU32040"/>
<dbReference type="TCDB" id="2.A.8.1.12">
    <property type="family name" value="the gluconate:h(+) symporter (gntp) family"/>
</dbReference>
<dbReference type="PaxDb" id="224308-BSU32040"/>
<dbReference type="EnsemblBacteria" id="CAB15194">
    <property type="protein sequence ID" value="CAB15194"/>
    <property type="gene ID" value="BSU_32040"/>
</dbReference>
<dbReference type="GeneID" id="937212"/>
<dbReference type="KEGG" id="bsu:BSU32040"/>
<dbReference type="PATRIC" id="fig|224308.179.peg.3470"/>
<dbReference type="eggNOG" id="COG2056">
    <property type="taxonomic scope" value="Bacteria"/>
</dbReference>
<dbReference type="InParanoid" id="O32105"/>
<dbReference type="OrthoDB" id="9772446at2"/>
<dbReference type="PhylomeDB" id="O32105"/>
<dbReference type="BioCyc" id="BSUB:BSU32040-MONOMER"/>
<dbReference type="Proteomes" id="UP000001570">
    <property type="component" value="Chromosome"/>
</dbReference>
<dbReference type="GO" id="GO:0005886">
    <property type="term" value="C:plasma membrane"/>
    <property type="evidence" value="ECO:0007669"/>
    <property type="project" value="UniProtKB-SubCell"/>
</dbReference>
<dbReference type="InterPro" id="IPR052576">
    <property type="entry name" value="AA_Transporter-Related"/>
</dbReference>
<dbReference type="InterPro" id="IPR018461">
    <property type="entry name" value="Na/H_Antiport_NhaC-like_C"/>
</dbReference>
<dbReference type="InterPro" id="IPR032813">
    <property type="entry name" value="Na_H_antiport_N"/>
</dbReference>
<dbReference type="PANTHER" id="PTHR37821">
    <property type="entry name" value="AMINO ACID TRANSPORTER YUIF-RELATED"/>
    <property type="match status" value="1"/>
</dbReference>
<dbReference type="PANTHER" id="PTHR37821:SF1">
    <property type="entry name" value="AMINO ACID TRANSPORTER YUIF-RELATED"/>
    <property type="match status" value="1"/>
</dbReference>
<dbReference type="Pfam" id="PF13726">
    <property type="entry name" value="Na_H_antiport_2"/>
    <property type="match status" value="1"/>
</dbReference>
<dbReference type="Pfam" id="PF03553">
    <property type="entry name" value="Na_H_antiporter"/>
    <property type="match status" value="1"/>
</dbReference>
<reference key="1">
    <citation type="journal article" date="1997" name="Nature">
        <title>The complete genome sequence of the Gram-positive bacterium Bacillus subtilis.</title>
        <authorList>
            <person name="Kunst F."/>
            <person name="Ogasawara N."/>
            <person name="Moszer I."/>
            <person name="Albertini A.M."/>
            <person name="Alloni G."/>
            <person name="Azevedo V."/>
            <person name="Bertero M.G."/>
            <person name="Bessieres P."/>
            <person name="Bolotin A."/>
            <person name="Borchert S."/>
            <person name="Borriss R."/>
            <person name="Boursier L."/>
            <person name="Brans A."/>
            <person name="Braun M."/>
            <person name="Brignell S.C."/>
            <person name="Bron S."/>
            <person name="Brouillet S."/>
            <person name="Bruschi C.V."/>
            <person name="Caldwell B."/>
            <person name="Capuano V."/>
            <person name="Carter N.M."/>
            <person name="Choi S.-K."/>
            <person name="Codani J.-J."/>
            <person name="Connerton I.F."/>
            <person name="Cummings N.J."/>
            <person name="Daniel R.A."/>
            <person name="Denizot F."/>
            <person name="Devine K.M."/>
            <person name="Duesterhoeft A."/>
            <person name="Ehrlich S.D."/>
            <person name="Emmerson P.T."/>
            <person name="Entian K.-D."/>
            <person name="Errington J."/>
            <person name="Fabret C."/>
            <person name="Ferrari E."/>
            <person name="Foulger D."/>
            <person name="Fritz C."/>
            <person name="Fujita M."/>
            <person name="Fujita Y."/>
            <person name="Fuma S."/>
            <person name="Galizzi A."/>
            <person name="Galleron N."/>
            <person name="Ghim S.-Y."/>
            <person name="Glaser P."/>
            <person name="Goffeau A."/>
            <person name="Golightly E.J."/>
            <person name="Grandi G."/>
            <person name="Guiseppi G."/>
            <person name="Guy B.J."/>
            <person name="Haga K."/>
            <person name="Haiech J."/>
            <person name="Harwood C.R."/>
            <person name="Henaut A."/>
            <person name="Hilbert H."/>
            <person name="Holsappel S."/>
            <person name="Hosono S."/>
            <person name="Hullo M.-F."/>
            <person name="Itaya M."/>
            <person name="Jones L.-M."/>
            <person name="Joris B."/>
            <person name="Karamata D."/>
            <person name="Kasahara Y."/>
            <person name="Klaerr-Blanchard M."/>
            <person name="Klein C."/>
            <person name="Kobayashi Y."/>
            <person name="Koetter P."/>
            <person name="Koningstein G."/>
            <person name="Krogh S."/>
            <person name="Kumano M."/>
            <person name="Kurita K."/>
            <person name="Lapidus A."/>
            <person name="Lardinois S."/>
            <person name="Lauber J."/>
            <person name="Lazarevic V."/>
            <person name="Lee S.-M."/>
            <person name="Levine A."/>
            <person name="Liu H."/>
            <person name="Masuda S."/>
            <person name="Mauel C."/>
            <person name="Medigue C."/>
            <person name="Medina N."/>
            <person name="Mellado R.P."/>
            <person name="Mizuno M."/>
            <person name="Moestl D."/>
            <person name="Nakai S."/>
            <person name="Noback M."/>
            <person name="Noone D."/>
            <person name="O'Reilly M."/>
            <person name="Ogawa K."/>
            <person name="Ogiwara A."/>
            <person name="Oudega B."/>
            <person name="Park S.-H."/>
            <person name="Parro V."/>
            <person name="Pohl T.M."/>
            <person name="Portetelle D."/>
            <person name="Porwollik S."/>
            <person name="Prescott A.M."/>
            <person name="Presecan E."/>
            <person name="Pujic P."/>
            <person name="Purnelle B."/>
            <person name="Rapoport G."/>
            <person name="Rey M."/>
            <person name="Reynolds S."/>
            <person name="Rieger M."/>
            <person name="Rivolta C."/>
            <person name="Rocha E."/>
            <person name="Roche B."/>
            <person name="Rose M."/>
            <person name="Sadaie Y."/>
            <person name="Sato T."/>
            <person name="Scanlan E."/>
            <person name="Schleich S."/>
            <person name="Schroeter R."/>
            <person name="Scoffone F."/>
            <person name="Sekiguchi J."/>
            <person name="Sekowska A."/>
            <person name="Seror S.J."/>
            <person name="Serror P."/>
            <person name="Shin B.-S."/>
            <person name="Soldo B."/>
            <person name="Sorokin A."/>
            <person name="Tacconi E."/>
            <person name="Takagi T."/>
            <person name="Takahashi H."/>
            <person name="Takemaru K."/>
            <person name="Takeuchi M."/>
            <person name="Tamakoshi A."/>
            <person name="Tanaka T."/>
            <person name="Terpstra P."/>
            <person name="Tognoni A."/>
            <person name="Tosato V."/>
            <person name="Uchiyama S."/>
            <person name="Vandenbol M."/>
            <person name="Vannier F."/>
            <person name="Vassarotti A."/>
            <person name="Viari A."/>
            <person name="Wambutt R."/>
            <person name="Wedler E."/>
            <person name="Wedler H."/>
            <person name="Weitzenegger T."/>
            <person name="Winters P."/>
            <person name="Wipat A."/>
            <person name="Yamamoto H."/>
            <person name="Yamane K."/>
            <person name="Yasumoto K."/>
            <person name="Yata K."/>
            <person name="Yoshida K."/>
            <person name="Yoshikawa H.-F."/>
            <person name="Zumstein E."/>
            <person name="Yoshikawa H."/>
            <person name="Danchin A."/>
        </authorList>
    </citation>
    <scope>NUCLEOTIDE SEQUENCE [LARGE SCALE GENOMIC DNA]</scope>
    <source>
        <strain>168</strain>
    </source>
</reference>
<protein>
    <recommendedName>
        <fullName>Putative amino acid transporter YuiF</fullName>
    </recommendedName>
</protein>
<evidence type="ECO:0000255" key="1"/>
<evidence type="ECO:0000305" key="2"/>
<feature type="chain" id="PRO_0000360637" description="Putative amino acid transporter YuiF">
    <location>
        <begin position="1"/>
        <end position="442"/>
    </location>
</feature>
<feature type="transmembrane region" description="Helical" evidence="1">
    <location>
        <begin position="21"/>
        <end position="41"/>
    </location>
</feature>
<feature type="transmembrane region" description="Helical" evidence="1">
    <location>
        <begin position="51"/>
        <end position="71"/>
    </location>
</feature>
<feature type="transmembrane region" description="Helical" evidence="1">
    <location>
        <begin position="103"/>
        <end position="123"/>
    </location>
</feature>
<feature type="transmembrane region" description="Helical" evidence="1">
    <location>
        <begin position="146"/>
        <end position="166"/>
    </location>
</feature>
<feature type="transmembrane region" description="Helical" evidence="1">
    <location>
        <begin position="190"/>
        <end position="210"/>
    </location>
</feature>
<feature type="transmembrane region" description="Helical" evidence="1">
    <location>
        <begin position="236"/>
        <end position="256"/>
    </location>
</feature>
<feature type="transmembrane region" description="Helical" evidence="1">
    <location>
        <begin position="259"/>
        <end position="279"/>
    </location>
</feature>
<feature type="transmembrane region" description="Helical" evidence="1">
    <location>
        <begin position="292"/>
        <end position="312"/>
    </location>
</feature>
<feature type="transmembrane region" description="Helical" evidence="1">
    <location>
        <begin position="335"/>
        <end position="355"/>
    </location>
</feature>
<feature type="transmembrane region" description="Helical" evidence="1">
    <location>
        <begin position="364"/>
        <end position="384"/>
    </location>
</feature>
<feature type="transmembrane region" description="Helical" evidence="1">
    <location>
        <begin position="421"/>
        <end position="441"/>
    </location>
</feature>
<sequence length="442" mass="45937">MNAVVIAVLLMLVLSLLRVNIVIALIIGALAGGLTGGLGLGETVKAFTDGLGGNATVAVSYAMLGAFAAALTKTGLPDAMVEASVKLIGNKEDSRKKALSKVLIVLIILIVSCFSQNVVPVHIAFIPVLIPPLLKIFNELEMDRRLIACVITFGLTAPYILLPVGFGQIFQGMLKDNMADAGLNVPLADIPYALIIPVAGMVVGLILSVIVYRKPKQYETKDISGAEASPYTRKSIGIAVLAIVVSLGVQLYLSQTLGVEGMIMGALAGLIVLFVSGVMKRDEADSLITDGMVLMAFIGFVMLVAAGFSNVLTKTGDVESLVKTSAGFIGHSQSLGALLMLIVGLLITMGIGSSFATIPVITTIFVPLCMQLGFSPMATIAIIGAAAALGDAGSPASDSTLGPTSGLSADGQHHHIWDTCVPTFIFYNIPLVIFGWIAALVL</sequence>
<organism>
    <name type="scientific">Bacillus subtilis (strain 168)</name>
    <dbReference type="NCBI Taxonomy" id="224308"/>
    <lineage>
        <taxon>Bacteria</taxon>
        <taxon>Bacillati</taxon>
        <taxon>Bacillota</taxon>
        <taxon>Bacilli</taxon>
        <taxon>Bacillales</taxon>
        <taxon>Bacillaceae</taxon>
        <taxon>Bacillus</taxon>
    </lineage>
</organism>
<keyword id="KW-1003">Cell membrane</keyword>
<keyword id="KW-0472">Membrane</keyword>
<keyword id="KW-1185">Reference proteome</keyword>
<keyword id="KW-0812">Transmembrane</keyword>
<keyword id="KW-1133">Transmembrane helix</keyword>
<keyword id="KW-0813">Transport</keyword>